<keyword id="KW-0223">Dioxygenase</keyword>
<keyword id="KW-0408">Iron</keyword>
<keyword id="KW-0479">Metal-binding</keyword>
<keyword id="KW-0560">Oxidoreductase</keyword>
<keyword id="KW-1185">Reference proteome</keyword>
<keyword id="KW-0847">Vitamin C</keyword>
<feature type="chain" id="PRO_1000061745" description="PKHD-type hydroxylase Veis_3084">
    <location>
        <begin position="1"/>
        <end position="227"/>
    </location>
</feature>
<feature type="domain" description="Fe2OG dioxygenase" evidence="1">
    <location>
        <begin position="78"/>
        <end position="179"/>
    </location>
</feature>
<feature type="region of interest" description="Disordered" evidence="2">
    <location>
        <begin position="27"/>
        <end position="51"/>
    </location>
</feature>
<feature type="compositionally biased region" description="Polar residues" evidence="2">
    <location>
        <begin position="33"/>
        <end position="47"/>
    </location>
</feature>
<feature type="binding site" evidence="1">
    <location>
        <position position="97"/>
    </location>
    <ligand>
        <name>Fe cation</name>
        <dbReference type="ChEBI" id="CHEBI:24875"/>
    </ligand>
</feature>
<feature type="binding site" evidence="1">
    <location>
        <position position="99"/>
    </location>
    <ligand>
        <name>Fe cation</name>
        <dbReference type="ChEBI" id="CHEBI:24875"/>
    </ligand>
</feature>
<feature type="binding site" evidence="1">
    <location>
        <position position="160"/>
    </location>
    <ligand>
        <name>Fe cation</name>
        <dbReference type="ChEBI" id="CHEBI:24875"/>
    </ligand>
</feature>
<feature type="binding site" evidence="1">
    <location>
        <position position="170"/>
    </location>
    <ligand>
        <name>2-oxoglutarate</name>
        <dbReference type="ChEBI" id="CHEBI:16810"/>
    </ligand>
</feature>
<evidence type="ECO:0000255" key="1">
    <source>
        <dbReference type="HAMAP-Rule" id="MF_00657"/>
    </source>
</evidence>
<evidence type="ECO:0000256" key="2">
    <source>
        <dbReference type="SAM" id="MobiDB-lite"/>
    </source>
</evidence>
<proteinExistence type="inferred from homology"/>
<gene>
    <name type="ordered locus">Veis_3084</name>
</gene>
<dbReference type="EC" id="1.14.11.-" evidence="1"/>
<dbReference type="EMBL" id="CP000542">
    <property type="protein sequence ID" value="ABM58817.1"/>
    <property type="molecule type" value="Genomic_DNA"/>
</dbReference>
<dbReference type="RefSeq" id="WP_011810812.1">
    <property type="nucleotide sequence ID" value="NC_008786.1"/>
</dbReference>
<dbReference type="SMR" id="A1WMG0"/>
<dbReference type="STRING" id="391735.Veis_3084"/>
<dbReference type="GeneID" id="76461547"/>
<dbReference type="KEGG" id="vei:Veis_3084"/>
<dbReference type="eggNOG" id="COG3128">
    <property type="taxonomic scope" value="Bacteria"/>
</dbReference>
<dbReference type="HOGENOM" id="CLU_106663_0_0_4"/>
<dbReference type="OrthoDB" id="9812472at2"/>
<dbReference type="Proteomes" id="UP000000374">
    <property type="component" value="Chromosome"/>
</dbReference>
<dbReference type="GO" id="GO:0016706">
    <property type="term" value="F:2-oxoglutarate-dependent dioxygenase activity"/>
    <property type="evidence" value="ECO:0007669"/>
    <property type="project" value="UniProtKB-UniRule"/>
</dbReference>
<dbReference type="GO" id="GO:0005506">
    <property type="term" value="F:iron ion binding"/>
    <property type="evidence" value="ECO:0007669"/>
    <property type="project" value="UniProtKB-UniRule"/>
</dbReference>
<dbReference type="GO" id="GO:0031418">
    <property type="term" value="F:L-ascorbic acid binding"/>
    <property type="evidence" value="ECO:0007669"/>
    <property type="project" value="UniProtKB-KW"/>
</dbReference>
<dbReference type="GO" id="GO:0006974">
    <property type="term" value="P:DNA damage response"/>
    <property type="evidence" value="ECO:0007669"/>
    <property type="project" value="TreeGrafter"/>
</dbReference>
<dbReference type="GO" id="GO:0006879">
    <property type="term" value="P:intracellular iron ion homeostasis"/>
    <property type="evidence" value="ECO:0007669"/>
    <property type="project" value="TreeGrafter"/>
</dbReference>
<dbReference type="Gene3D" id="2.60.120.620">
    <property type="entry name" value="q2cbj1_9rhob like domain"/>
    <property type="match status" value="1"/>
</dbReference>
<dbReference type="Gene3D" id="4.10.860.20">
    <property type="entry name" value="Rabenosyn, Rab binding domain"/>
    <property type="match status" value="1"/>
</dbReference>
<dbReference type="HAMAP" id="MF_00657">
    <property type="entry name" value="Hydroxyl_YbiX"/>
    <property type="match status" value="1"/>
</dbReference>
<dbReference type="InterPro" id="IPR005123">
    <property type="entry name" value="Oxoglu/Fe-dep_dioxygenase_dom"/>
</dbReference>
<dbReference type="InterPro" id="IPR041097">
    <property type="entry name" value="PKHD_C"/>
</dbReference>
<dbReference type="InterPro" id="IPR023550">
    <property type="entry name" value="PKHD_hydroxylase"/>
</dbReference>
<dbReference type="InterPro" id="IPR006620">
    <property type="entry name" value="Pro_4_hyd_alph"/>
</dbReference>
<dbReference type="InterPro" id="IPR044862">
    <property type="entry name" value="Pro_4_hyd_alph_FE2OG_OXY"/>
</dbReference>
<dbReference type="NCBIfam" id="NF003974">
    <property type="entry name" value="PRK05467.1-3"/>
    <property type="match status" value="1"/>
</dbReference>
<dbReference type="NCBIfam" id="NF003975">
    <property type="entry name" value="PRK05467.1-4"/>
    <property type="match status" value="1"/>
</dbReference>
<dbReference type="PANTHER" id="PTHR41536">
    <property type="entry name" value="PKHD-TYPE HYDROXYLASE YBIX"/>
    <property type="match status" value="1"/>
</dbReference>
<dbReference type="PANTHER" id="PTHR41536:SF1">
    <property type="entry name" value="PKHD-TYPE HYDROXYLASE YBIX"/>
    <property type="match status" value="1"/>
</dbReference>
<dbReference type="Pfam" id="PF13640">
    <property type="entry name" value="2OG-FeII_Oxy_3"/>
    <property type="match status" value="1"/>
</dbReference>
<dbReference type="Pfam" id="PF18331">
    <property type="entry name" value="PKHD_C"/>
    <property type="match status" value="1"/>
</dbReference>
<dbReference type="SMART" id="SM00702">
    <property type="entry name" value="P4Hc"/>
    <property type="match status" value="1"/>
</dbReference>
<dbReference type="PROSITE" id="PS51471">
    <property type="entry name" value="FE2OG_OXY"/>
    <property type="match status" value="1"/>
</dbReference>
<protein>
    <recommendedName>
        <fullName evidence="1">PKHD-type hydroxylase Veis_3084</fullName>
        <ecNumber evidence="1">1.14.11.-</ecNumber>
    </recommendedName>
</protein>
<accession>A1WMG0</accession>
<organism>
    <name type="scientific">Verminephrobacter eiseniae (strain EF01-2)</name>
    <dbReference type="NCBI Taxonomy" id="391735"/>
    <lineage>
        <taxon>Bacteria</taxon>
        <taxon>Pseudomonadati</taxon>
        <taxon>Pseudomonadota</taxon>
        <taxon>Betaproteobacteria</taxon>
        <taxon>Burkholderiales</taxon>
        <taxon>Comamonadaceae</taxon>
        <taxon>Verminephrobacter</taxon>
    </lineage>
</organism>
<reference key="1">
    <citation type="submission" date="2006-12" db="EMBL/GenBank/DDBJ databases">
        <title>Complete sequence of chromosome 1 of Verminephrobacter eiseniae EF01-2.</title>
        <authorList>
            <person name="Copeland A."/>
            <person name="Lucas S."/>
            <person name="Lapidus A."/>
            <person name="Barry K."/>
            <person name="Detter J.C."/>
            <person name="Glavina del Rio T."/>
            <person name="Dalin E."/>
            <person name="Tice H."/>
            <person name="Pitluck S."/>
            <person name="Chertkov O."/>
            <person name="Brettin T."/>
            <person name="Bruce D."/>
            <person name="Han C."/>
            <person name="Tapia R."/>
            <person name="Gilna P."/>
            <person name="Schmutz J."/>
            <person name="Larimer F."/>
            <person name="Land M."/>
            <person name="Hauser L."/>
            <person name="Kyrpides N."/>
            <person name="Kim E."/>
            <person name="Stahl D."/>
            <person name="Richardson P."/>
        </authorList>
    </citation>
    <scope>NUCLEOTIDE SEQUENCE [LARGE SCALE GENOMIC DNA]</scope>
    <source>
        <strain>EF01-2</strain>
    </source>
</reference>
<comment type="cofactor">
    <cofactor evidence="1">
        <name>Fe(2+)</name>
        <dbReference type="ChEBI" id="CHEBI:29033"/>
    </cofactor>
    <text evidence="1">Binds 1 Fe(2+) ion per subunit.</text>
</comment>
<comment type="cofactor">
    <cofactor evidence="1">
        <name>L-ascorbate</name>
        <dbReference type="ChEBI" id="CHEBI:38290"/>
    </cofactor>
</comment>
<sequence>MLLILADLLSPQELQTARQLLRNARWDDGKDSAGTQARQAKNNQQLPRDSEAGRRIAAMVLAALERSALFLTATLPKRVFPPRVNRYGGEHNHYGDHVDSAVRQLADRHDRLRTDISCTVFLSPPDEYDGGELCIDDTFGPQRVKLPAGHAVIYPGTSVHQVRPVTRGYRMACFFWVESLVRSAEQRRLLYDMDMALLRLRQQHGESPETVALTGSYHNLLRMWADT</sequence>
<name>Y3084_VEREI</name>